<name>KBAZ_ECODH</name>
<comment type="function">
    <text evidence="1">Component of the tagatose-1,6-bisphosphate aldolase KbaYZ that is required for full activity and stability of the Y subunit. Could have a chaperone-like function for the proper and stable folding of KbaY. When expressed alone, KbaZ does not show any aldolase activity.</text>
</comment>
<comment type="pathway">
    <text evidence="1">Carbohydrate metabolism; D-tagatose 6-phosphate degradation; D-glyceraldehyde 3-phosphate and glycerone phosphate from D-tagatose 6-phosphate: step 2/2.</text>
</comment>
<comment type="subunit">
    <text evidence="1">Forms a complex with KbaY.</text>
</comment>
<comment type="similarity">
    <text evidence="1">Belongs to the GatZ/KbaZ family. KbaZ subfamily.</text>
</comment>
<protein>
    <recommendedName>
        <fullName evidence="1">D-tagatose-1,6-bisphosphate aldolase subunit KbaZ</fullName>
    </recommendedName>
</protein>
<organism>
    <name type="scientific">Escherichia coli (strain K12 / DH10B)</name>
    <dbReference type="NCBI Taxonomy" id="316385"/>
    <lineage>
        <taxon>Bacteria</taxon>
        <taxon>Pseudomonadati</taxon>
        <taxon>Pseudomonadota</taxon>
        <taxon>Gammaproteobacteria</taxon>
        <taxon>Enterobacterales</taxon>
        <taxon>Enterobacteriaceae</taxon>
        <taxon>Escherichia</taxon>
    </lineage>
</organism>
<accession>B1XGU5</accession>
<reference key="1">
    <citation type="journal article" date="2008" name="J. Bacteriol.">
        <title>The complete genome sequence of Escherichia coli DH10B: insights into the biology of a laboratory workhorse.</title>
        <authorList>
            <person name="Durfee T."/>
            <person name="Nelson R."/>
            <person name="Baldwin S."/>
            <person name="Plunkett G. III"/>
            <person name="Burland V."/>
            <person name="Mau B."/>
            <person name="Petrosino J.F."/>
            <person name="Qin X."/>
            <person name="Muzny D.M."/>
            <person name="Ayele M."/>
            <person name="Gibbs R.A."/>
            <person name="Csorgo B."/>
            <person name="Posfai G."/>
            <person name="Weinstock G.M."/>
            <person name="Blattner F.R."/>
        </authorList>
    </citation>
    <scope>NUCLEOTIDE SEQUENCE [LARGE SCALE GENOMIC DNA]</scope>
    <source>
        <strain>K12 / DH10B</strain>
    </source>
</reference>
<proteinExistence type="inferred from homology"/>
<dbReference type="EMBL" id="CP000948">
    <property type="protein sequence ID" value="ACB04212.1"/>
    <property type="molecule type" value="Genomic_DNA"/>
</dbReference>
<dbReference type="RefSeq" id="WP_000681920.1">
    <property type="nucleotide sequence ID" value="NC_010473.1"/>
</dbReference>
<dbReference type="SMR" id="B1XGU5"/>
<dbReference type="KEGG" id="ecd:ECDH10B_3305"/>
<dbReference type="HOGENOM" id="CLU_053334_0_0_6"/>
<dbReference type="UniPathway" id="UPA00704">
    <property type="reaction ID" value="UER00716"/>
</dbReference>
<dbReference type="GO" id="GO:0005886">
    <property type="term" value="C:plasma membrane"/>
    <property type="evidence" value="ECO:0007669"/>
    <property type="project" value="TreeGrafter"/>
</dbReference>
<dbReference type="GO" id="GO:0005975">
    <property type="term" value="P:carbohydrate metabolic process"/>
    <property type="evidence" value="ECO:0007669"/>
    <property type="project" value="InterPro"/>
</dbReference>
<dbReference type="GO" id="GO:2001059">
    <property type="term" value="P:D-tagatose 6-phosphate catabolic process"/>
    <property type="evidence" value="ECO:0007669"/>
    <property type="project" value="UniProtKB-UniRule"/>
</dbReference>
<dbReference type="GO" id="GO:0009401">
    <property type="term" value="P:phosphoenolpyruvate-dependent sugar phosphotransferase system"/>
    <property type="evidence" value="ECO:0007669"/>
    <property type="project" value="TreeGrafter"/>
</dbReference>
<dbReference type="Gene3D" id="3.20.20.70">
    <property type="entry name" value="Aldolase class I"/>
    <property type="match status" value="1"/>
</dbReference>
<dbReference type="Gene3D" id="1.10.400.20">
    <property type="entry name" value="putative tagatose 6-phosphate kinase domain like"/>
    <property type="match status" value="1"/>
</dbReference>
<dbReference type="HAMAP" id="MF_01295">
    <property type="entry name" value="Tagatose_aldol_KbaZ"/>
    <property type="match status" value="1"/>
</dbReference>
<dbReference type="InterPro" id="IPR013785">
    <property type="entry name" value="Aldolase_TIM"/>
</dbReference>
<dbReference type="InterPro" id="IPR012062">
    <property type="entry name" value="GatZ/KbaZ-like"/>
</dbReference>
<dbReference type="InterPro" id="IPR050303">
    <property type="entry name" value="GatZ_KbaZ_carbometab"/>
</dbReference>
<dbReference type="InterPro" id="IPR023435">
    <property type="entry name" value="TagBP_ald_KbaZ"/>
</dbReference>
<dbReference type="NCBIfam" id="TIGR02810">
    <property type="entry name" value="agaZ_gatZ"/>
    <property type="match status" value="1"/>
</dbReference>
<dbReference type="NCBIfam" id="NF012002">
    <property type="entry name" value="PRK15458.1"/>
    <property type="match status" value="1"/>
</dbReference>
<dbReference type="PANTHER" id="PTHR32502:SF2">
    <property type="entry name" value="D-TAGATOSE-1,6-BISPHOSPHATE ALDOLASE SUBUNIT KBAZ"/>
    <property type="match status" value="1"/>
</dbReference>
<dbReference type="PANTHER" id="PTHR32502">
    <property type="entry name" value="N-ACETYLGALACTOSAMINE PERMEASE II COMPONENT-RELATED"/>
    <property type="match status" value="1"/>
</dbReference>
<dbReference type="Pfam" id="PF08013">
    <property type="entry name" value="GatZ_KbaZ-like"/>
    <property type="match status" value="1"/>
</dbReference>
<dbReference type="PIRSF" id="PIRSF009264">
    <property type="entry name" value="TagBP_ald_AgaZ"/>
    <property type="match status" value="1"/>
</dbReference>
<dbReference type="SUPFAM" id="SSF51569">
    <property type="entry name" value="Aldolase"/>
    <property type="match status" value="1"/>
</dbReference>
<sequence>MKHLTEMVRQHKAGKTNGIYAVCSAHPLVLEAAIRYASANQTPLLIEATSNQVDQFGGYTGMTPADFRGFVCQLADSLNFPQDALILGGDHLGPNRWQNLPAAQAMANADDLIKSYVAAGFKKIHLDCSMSCQDDPIPLTDDIVAERAARLAKVAEETCLEHFGEADLEYVIGTEVPVPGGAHETLSELAVTTPDAARATLEAHRHAFEKQGLNAIWPRIIALVVQPGVEFDHTNVIDYQPAKASALSQMVENYETLIFEAHSTDYQTPQSLRQLVIDHFAILKVGPALTFALREALFSLAAIEEELVPAKACSGLRQVLEDVMLDRPEYWQSHYHGDGNARRLARGYSYSDRVRYYWPDSQIDDAFAHLVRNLADSPIPLPLISQYLPLQYVKVRSGELQPTPRELIINHIQDILAQYHTACEGQ</sequence>
<gene>
    <name evidence="1" type="primary">kbaZ</name>
    <name type="ordered locus">ECDH10B_3305</name>
</gene>
<feature type="chain" id="PRO_0000372526" description="D-tagatose-1,6-bisphosphate aldolase subunit KbaZ">
    <location>
        <begin position="1"/>
        <end position="426"/>
    </location>
</feature>
<evidence type="ECO:0000255" key="1">
    <source>
        <dbReference type="HAMAP-Rule" id="MF_01295"/>
    </source>
</evidence>